<comment type="function">
    <text evidence="2">Involved in base excision repair of DNA damaged by oxidation or by mutagenic agents. Acts as a DNA glycosylase that recognizes and removes damaged bases. Has a preference for oxidized purines, such as 7,8-dihydro-8-oxoguanine (8-oxoG). Has AP (apurinic/apyrimidinic) lyase activity and introduces nicks in the DNA strand. Cleaves the DNA backbone by beta-delta elimination to generate a single-strand break at the site of the removed base with both 3'- and 5'-phosphates.</text>
</comment>
<comment type="catalytic activity">
    <reaction evidence="2">
        <text>Hydrolysis of DNA containing ring-opened 7-methylguanine residues, releasing 2,6-diamino-4-hydroxy-5-(N-methyl)formamidopyrimidine.</text>
        <dbReference type="EC" id="3.2.2.23"/>
    </reaction>
</comment>
<comment type="catalytic activity">
    <reaction evidence="2">
        <text>2'-deoxyribonucleotide-(2'-deoxyribose 5'-phosphate)-2'-deoxyribonucleotide-DNA = a 3'-end 2'-deoxyribonucleotide-(2,3-dehydro-2,3-deoxyribose 5'-phosphate)-DNA + a 5'-end 5'-phospho-2'-deoxyribonucleoside-DNA + H(+)</text>
        <dbReference type="Rhea" id="RHEA:66592"/>
        <dbReference type="Rhea" id="RHEA-COMP:13180"/>
        <dbReference type="Rhea" id="RHEA-COMP:16897"/>
        <dbReference type="Rhea" id="RHEA-COMP:17067"/>
        <dbReference type="ChEBI" id="CHEBI:15378"/>
        <dbReference type="ChEBI" id="CHEBI:136412"/>
        <dbReference type="ChEBI" id="CHEBI:157695"/>
        <dbReference type="ChEBI" id="CHEBI:167181"/>
        <dbReference type="EC" id="4.2.99.18"/>
    </reaction>
</comment>
<comment type="cofactor">
    <cofactor evidence="2">
        <name>Zn(2+)</name>
        <dbReference type="ChEBI" id="CHEBI:29105"/>
    </cofactor>
    <text evidence="2">Binds 1 zinc ion per subunit.</text>
</comment>
<comment type="subunit">
    <text evidence="2">Monomer.</text>
</comment>
<comment type="similarity">
    <text evidence="2">Belongs to the FPG family.</text>
</comment>
<gene>
    <name evidence="2" type="primary">mutM</name>
    <name evidence="2" type="synonym">fpg</name>
    <name type="ordered locus">MMOB3720</name>
</gene>
<protein>
    <recommendedName>
        <fullName evidence="2">Formamidopyrimidine-DNA glycosylase</fullName>
        <shortName evidence="2">Fapy-DNA glycosylase</shortName>
        <ecNumber evidence="2">3.2.2.23</ecNumber>
    </recommendedName>
    <alternativeName>
        <fullName evidence="2">DNA-(apurinic or apyrimidinic site) lyase MutM</fullName>
        <shortName evidence="2">AP lyase MutM</shortName>
        <ecNumber evidence="2">4.2.99.18</ecNumber>
    </alternativeName>
</protein>
<keyword id="KW-0227">DNA damage</keyword>
<keyword id="KW-0234">DNA repair</keyword>
<keyword id="KW-0238">DNA-binding</keyword>
<keyword id="KW-0326">Glycosidase</keyword>
<keyword id="KW-0378">Hydrolase</keyword>
<keyword id="KW-0456">Lyase</keyword>
<keyword id="KW-0479">Metal-binding</keyword>
<keyword id="KW-0511">Multifunctional enzyme</keyword>
<keyword id="KW-1185">Reference proteome</keyword>
<keyword id="KW-0862">Zinc</keyword>
<keyword id="KW-0863">Zinc-finger</keyword>
<dbReference type="EC" id="3.2.2.23" evidence="2"/>
<dbReference type="EC" id="4.2.99.18" evidence="2"/>
<dbReference type="EMBL" id="AE017308">
    <property type="protein sequence ID" value="AAT27858.1"/>
    <property type="molecule type" value="Genomic_DNA"/>
</dbReference>
<dbReference type="RefSeq" id="WP_011264892.1">
    <property type="nucleotide sequence ID" value="NC_006908.1"/>
</dbReference>
<dbReference type="SMR" id="Q6KHS0"/>
<dbReference type="STRING" id="267748.MMOB3720"/>
<dbReference type="KEGG" id="mmo:MMOB3720"/>
<dbReference type="eggNOG" id="COG0266">
    <property type="taxonomic scope" value="Bacteria"/>
</dbReference>
<dbReference type="HOGENOM" id="CLU_038423_1_3_14"/>
<dbReference type="OrthoDB" id="9800855at2"/>
<dbReference type="Proteomes" id="UP000009072">
    <property type="component" value="Chromosome"/>
</dbReference>
<dbReference type="GO" id="GO:0034039">
    <property type="term" value="F:8-oxo-7,8-dihydroguanine DNA N-glycosylase activity"/>
    <property type="evidence" value="ECO:0007669"/>
    <property type="project" value="TreeGrafter"/>
</dbReference>
<dbReference type="GO" id="GO:0140078">
    <property type="term" value="F:class I DNA-(apurinic or apyrimidinic site) endonuclease activity"/>
    <property type="evidence" value="ECO:0007669"/>
    <property type="project" value="UniProtKB-EC"/>
</dbReference>
<dbReference type="GO" id="GO:0003684">
    <property type="term" value="F:damaged DNA binding"/>
    <property type="evidence" value="ECO:0007669"/>
    <property type="project" value="InterPro"/>
</dbReference>
<dbReference type="GO" id="GO:0008270">
    <property type="term" value="F:zinc ion binding"/>
    <property type="evidence" value="ECO:0007669"/>
    <property type="project" value="UniProtKB-UniRule"/>
</dbReference>
<dbReference type="GO" id="GO:0006284">
    <property type="term" value="P:base-excision repair"/>
    <property type="evidence" value="ECO:0007669"/>
    <property type="project" value="InterPro"/>
</dbReference>
<dbReference type="CDD" id="cd08966">
    <property type="entry name" value="EcFpg-like_N"/>
    <property type="match status" value="1"/>
</dbReference>
<dbReference type="FunFam" id="1.10.8.50:FF:000003">
    <property type="entry name" value="Formamidopyrimidine-DNA glycosylase"/>
    <property type="match status" value="1"/>
</dbReference>
<dbReference type="Gene3D" id="1.10.8.50">
    <property type="match status" value="1"/>
</dbReference>
<dbReference type="Gene3D" id="3.20.190.10">
    <property type="entry name" value="MutM-like, N-terminal"/>
    <property type="match status" value="1"/>
</dbReference>
<dbReference type="HAMAP" id="MF_00103">
    <property type="entry name" value="Fapy_DNA_glycosyl"/>
    <property type="match status" value="1"/>
</dbReference>
<dbReference type="InterPro" id="IPR015886">
    <property type="entry name" value="DNA_glyclase/AP_lyase_DNA-bd"/>
</dbReference>
<dbReference type="InterPro" id="IPR015887">
    <property type="entry name" value="DNA_glyclase_Znf_dom_DNA_BS"/>
</dbReference>
<dbReference type="InterPro" id="IPR020629">
    <property type="entry name" value="Formamido-pyr_DNA_Glyclase"/>
</dbReference>
<dbReference type="InterPro" id="IPR012319">
    <property type="entry name" value="FPG_cat"/>
</dbReference>
<dbReference type="InterPro" id="IPR035937">
    <property type="entry name" value="MutM-like_N-ter"/>
</dbReference>
<dbReference type="InterPro" id="IPR010979">
    <property type="entry name" value="Ribosomal_uS13-like_H2TH"/>
</dbReference>
<dbReference type="InterPro" id="IPR000214">
    <property type="entry name" value="Znf_DNA_glyclase/AP_lyase"/>
</dbReference>
<dbReference type="InterPro" id="IPR010663">
    <property type="entry name" value="Znf_FPG/IleRS"/>
</dbReference>
<dbReference type="NCBIfam" id="TIGR00577">
    <property type="entry name" value="fpg"/>
    <property type="match status" value="1"/>
</dbReference>
<dbReference type="NCBIfam" id="NF002211">
    <property type="entry name" value="PRK01103.1"/>
    <property type="match status" value="1"/>
</dbReference>
<dbReference type="PANTHER" id="PTHR22993">
    <property type="entry name" value="FORMAMIDOPYRIMIDINE-DNA GLYCOSYLASE"/>
    <property type="match status" value="1"/>
</dbReference>
<dbReference type="PANTHER" id="PTHR22993:SF9">
    <property type="entry name" value="FORMAMIDOPYRIMIDINE-DNA GLYCOSYLASE"/>
    <property type="match status" value="1"/>
</dbReference>
<dbReference type="Pfam" id="PF01149">
    <property type="entry name" value="Fapy_DNA_glyco"/>
    <property type="match status" value="1"/>
</dbReference>
<dbReference type="Pfam" id="PF06831">
    <property type="entry name" value="H2TH"/>
    <property type="match status" value="1"/>
</dbReference>
<dbReference type="Pfam" id="PF06827">
    <property type="entry name" value="zf-FPG_IleRS"/>
    <property type="match status" value="1"/>
</dbReference>
<dbReference type="SMART" id="SM00898">
    <property type="entry name" value="Fapy_DNA_glyco"/>
    <property type="match status" value="1"/>
</dbReference>
<dbReference type="SMART" id="SM01232">
    <property type="entry name" value="H2TH"/>
    <property type="match status" value="1"/>
</dbReference>
<dbReference type="SUPFAM" id="SSF57716">
    <property type="entry name" value="Glucocorticoid receptor-like (DNA-binding domain)"/>
    <property type="match status" value="1"/>
</dbReference>
<dbReference type="SUPFAM" id="SSF81624">
    <property type="entry name" value="N-terminal domain of MutM-like DNA repair proteins"/>
    <property type="match status" value="1"/>
</dbReference>
<dbReference type="SUPFAM" id="SSF46946">
    <property type="entry name" value="S13-like H2TH domain"/>
    <property type="match status" value="1"/>
</dbReference>
<dbReference type="PROSITE" id="PS51068">
    <property type="entry name" value="FPG_CAT"/>
    <property type="match status" value="1"/>
</dbReference>
<dbReference type="PROSITE" id="PS01242">
    <property type="entry name" value="ZF_FPG_1"/>
    <property type="match status" value="1"/>
</dbReference>
<dbReference type="PROSITE" id="PS51066">
    <property type="entry name" value="ZF_FPG_2"/>
    <property type="match status" value="1"/>
</dbReference>
<name>FPG_MYCM1</name>
<organism>
    <name type="scientific">Mycoplasma mobile (strain ATCC 43663 / 163K / NCTC 11711)</name>
    <name type="common">Mesomycoplasma mobile</name>
    <dbReference type="NCBI Taxonomy" id="267748"/>
    <lineage>
        <taxon>Bacteria</taxon>
        <taxon>Bacillati</taxon>
        <taxon>Mycoplasmatota</taxon>
        <taxon>Mycoplasmoidales</taxon>
        <taxon>Metamycoplasmataceae</taxon>
        <taxon>Mesomycoplasma</taxon>
    </lineage>
</organism>
<evidence type="ECO:0000250" key="1"/>
<evidence type="ECO:0000255" key="2">
    <source>
        <dbReference type="HAMAP-Rule" id="MF_00103"/>
    </source>
</evidence>
<feature type="initiator methionine" description="Removed" evidence="1">
    <location>
        <position position="1"/>
    </location>
</feature>
<feature type="chain" id="PRO_0000228449" description="Formamidopyrimidine-DNA glycosylase">
    <location>
        <begin position="2"/>
        <end position="274"/>
    </location>
</feature>
<feature type="zinc finger region" description="FPG-type" evidence="2">
    <location>
        <begin position="238"/>
        <end position="272"/>
    </location>
</feature>
<feature type="active site" description="Schiff-base intermediate with DNA" evidence="2">
    <location>
        <position position="2"/>
    </location>
</feature>
<feature type="active site" description="Proton donor" evidence="2">
    <location>
        <position position="3"/>
    </location>
</feature>
<feature type="active site" description="Proton donor; for beta-elimination activity" evidence="2">
    <location>
        <position position="59"/>
    </location>
</feature>
<feature type="active site" description="Proton donor; for delta-elimination activity" evidence="2">
    <location>
        <position position="262"/>
    </location>
</feature>
<feature type="binding site" evidence="2">
    <location>
        <position position="93"/>
    </location>
    <ligand>
        <name>DNA</name>
        <dbReference type="ChEBI" id="CHEBI:16991"/>
    </ligand>
</feature>
<feature type="binding site" evidence="2">
    <location>
        <position position="112"/>
    </location>
    <ligand>
        <name>DNA</name>
        <dbReference type="ChEBI" id="CHEBI:16991"/>
    </ligand>
</feature>
<feature type="binding site" evidence="2">
    <location>
        <position position="153"/>
    </location>
    <ligand>
        <name>DNA</name>
        <dbReference type="ChEBI" id="CHEBI:16991"/>
    </ligand>
</feature>
<proteinExistence type="inferred from homology"/>
<sequence length="274" mass="31937">MPELPEVKTVILHLKKLILDKTISKIEIFIPKMIKEISSEEFKKYLENETIFNIENEGKFIVFFLSNNKIMLSHLRMEGGYNFYSKKRQKEIHDRLIFHFTDGSSLHYHDSRMFGTFHFRNSENYLKIKPLSLVAPVPWKIDLDEFFKLLKRKKTAIKKILLDQQIIAGLGNIYVDETLFASKVHPEFKANQLSLEQVKLILKNATRILQESTKLGGSSIRSYTSLNEKEGSFQNFLQVHTKFNKPCPNCGELIQKIKLGGRGTYFCKKCQQLN</sequence>
<reference key="1">
    <citation type="journal article" date="2004" name="Genome Res.">
        <title>The complete genome and proteome of Mycoplasma mobile.</title>
        <authorList>
            <person name="Jaffe J.D."/>
            <person name="Stange-Thomann N."/>
            <person name="Smith C."/>
            <person name="DeCaprio D."/>
            <person name="Fisher S."/>
            <person name="Butler J."/>
            <person name="Calvo S."/>
            <person name="Elkins T."/>
            <person name="FitzGerald M.G."/>
            <person name="Hafez N."/>
            <person name="Kodira C.D."/>
            <person name="Major J."/>
            <person name="Wang S."/>
            <person name="Wilkinson J."/>
            <person name="Nicol R."/>
            <person name="Nusbaum C."/>
            <person name="Birren B."/>
            <person name="Berg H.C."/>
            <person name="Church G.M."/>
        </authorList>
    </citation>
    <scope>NUCLEOTIDE SEQUENCE [LARGE SCALE GENOMIC DNA]</scope>
    <source>
        <strain>ATCC 43663 / NCTC 11711 / 163 K</strain>
    </source>
</reference>
<accession>Q6KHS0</accession>